<sequence>MGRGAGREYSPAATTAENGGGKKKQKEKELDELKKEVAMDDHKLSLDELGRKYQVDLSKGLTNQRAQDILARDGPNALTPPPTTPEWVKFCRQLFGGFSILLWIGALLCFLAYGILAAMEDEPSNDNLYLGIVLAAVVIVTGCFSYYQEAKSSKIMDSFKNMVPQQALVIREGEKMQINAEEVVVGDLVEVKGGDRVPADLRIISSHGCKVDNSSLTGESEPQTRSPEFTHENPLETRNICFFSTNCVEGTARGIVIATGDRTVMGRIATLASGLEVGQTPIAMEIEHFIQLITGVAVFLGVSFFVLSLILGYSWLEAVIFLIGIIVANVPEGLLATVTVCLTLTAKRMARKNCLVKNLEAVETLGSTSTICSDKTGTLTQNRMTVAHMWFDNQIHEADTTEDQSGATFDKRSPTWTALSRIAGLCNRAVFKAGQENISVSKRDTAGDASESALLKCIELSCGSVRKMRDRNPKVAEIPFNSTNKYQLSIHEREDSPQSHVLVMKGAPERILDRCSTILVQGKEIPLDKEMQDAFQNAYMELGGLGERVLGFCQLNLPSGKFPRGFKFDTDELNFPTEKLCFVGLMSMIDPPRAAVPDAVGKCRSAGIKVIMVTGDHPITAKAIAKGVGIISEGNETVEDIAARLNIPVSQVNPREAKACVVHGSDLKDMTSEQLDEILRDHTEIVFARTSPQQKLIIVEGCQRQGAIVAVTGDGVNDSPALKKADIGIAMGISGSDVSKQAADMILLDDNFASIVTGVEEGRLIFDNLKKSIAYTLTSNIPEITPFLLFIIANIPLPLGTVTILCIDLGTDMVPAISLAYEAAESDIMKRQPRNSQTDKLVNERLISMAYGQIGMIQALGGFFTYFVILAENGFLPSRLLGIRLDWDDRTTNDLEDSYGQEWTYEQRKVVEFTCHTAFFASIVVVQWADLIICKTRRNSVFQQGMKNKILIFGLLEETALAAFLSYCPGMGVALRMYPLKVTWWFCAFPYSLLIFIYDEVRKLILRRYPGGWVEKETYY</sequence>
<comment type="function">
    <text evidence="1">This is the catalytic component of the active enzyme, which catalyzes the hydrolysis of ATP coupled with the exchange of sodium and potassium ions across the plasma membrane. This action creates the electrochemical gradient of sodium and potassium ions, providing the energy for active transport of various nutrients (By similarity).</text>
</comment>
<comment type="catalytic activity">
    <reaction>
        <text>K(+)(out) + Na(+)(in) + ATP + H2O = K(+)(in) + Na(+)(out) + ADP + phosphate + H(+)</text>
        <dbReference type="Rhea" id="RHEA:18353"/>
        <dbReference type="ChEBI" id="CHEBI:15377"/>
        <dbReference type="ChEBI" id="CHEBI:15378"/>
        <dbReference type="ChEBI" id="CHEBI:29101"/>
        <dbReference type="ChEBI" id="CHEBI:29103"/>
        <dbReference type="ChEBI" id="CHEBI:30616"/>
        <dbReference type="ChEBI" id="CHEBI:43474"/>
        <dbReference type="ChEBI" id="CHEBI:456216"/>
        <dbReference type="EC" id="7.2.2.13"/>
    </reaction>
</comment>
<comment type="subunit">
    <text evidence="2">The sodium/potassium-transporting ATPase is composed of a catalytic alpha subunit, an auxiliary non-catalytic beta subunit and an additional regulatory subunit. Interacts with regulatory subunit FXYD1.</text>
</comment>
<comment type="interaction">
    <interactant intactId="EBI-6665421">
        <id>Q6PIE5</id>
    </interactant>
    <interactant intactId="EBI-541478">
        <id>P11881</id>
        <label>Itpr1</label>
    </interactant>
    <organismsDiffer>false</organismsDiffer>
    <experiments>3</experiments>
</comment>
<comment type="interaction">
    <interactant intactId="EBI-6665421">
        <id>Q6PIE5</id>
    </interactant>
    <interactant intactId="EBI-8351080">
        <id>O35157</id>
        <label>Slc8a1</label>
    </interactant>
    <organismsDiffer>false</organismsDiffer>
    <experiments>4</experiments>
</comment>
<comment type="subcellular location">
    <subcellularLocation>
        <location evidence="1">Membrane</location>
        <topology evidence="1">Multi-pass membrane protein</topology>
    </subcellularLocation>
    <subcellularLocation>
        <location evidence="1">Cell membrane</location>
        <topology evidence="1">Multi-pass membrane protein</topology>
    </subcellularLocation>
</comment>
<comment type="similarity">
    <text evidence="8">Belongs to the cation transport ATPase (P-type) (TC 3.A.3) family. Type IIC subfamily.</text>
</comment>
<gene>
    <name type="primary">Atp1a2</name>
</gene>
<evidence type="ECO:0000250" key="1"/>
<evidence type="ECO:0000250" key="2">
    <source>
        <dbReference type="UniProtKB" id="A2VDL6"/>
    </source>
</evidence>
<evidence type="ECO:0000250" key="3">
    <source>
        <dbReference type="UniProtKB" id="P06686"/>
    </source>
</evidence>
<evidence type="ECO:0000250" key="4">
    <source>
        <dbReference type="UniProtKB" id="P09626"/>
    </source>
</evidence>
<evidence type="ECO:0000250" key="5">
    <source>
        <dbReference type="UniProtKB" id="P50993"/>
    </source>
</evidence>
<evidence type="ECO:0000255" key="6"/>
<evidence type="ECO:0000256" key="7">
    <source>
        <dbReference type="SAM" id="MobiDB-lite"/>
    </source>
</evidence>
<evidence type="ECO:0000305" key="8"/>
<evidence type="ECO:0007744" key="9">
    <source>
    </source>
</evidence>
<proteinExistence type="evidence at protein level"/>
<keyword id="KW-0067">ATP-binding</keyword>
<keyword id="KW-1003">Cell membrane</keyword>
<keyword id="KW-0903">Direct protein sequencing</keyword>
<keyword id="KW-0406">Ion transport</keyword>
<keyword id="KW-0460">Magnesium</keyword>
<keyword id="KW-0472">Membrane</keyword>
<keyword id="KW-0479">Metal-binding</keyword>
<keyword id="KW-0547">Nucleotide-binding</keyword>
<keyword id="KW-0597">Phosphoprotein</keyword>
<keyword id="KW-0630">Potassium</keyword>
<keyword id="KW-0633">Potassium transport</keyword>
<keyword id="KW-1185">Reference proteome</keyword>
<keyword id="KW-0915">Sodium</keyword>
<keyword id="KW-0739">Sodium transport</keyword>
<keyword id="KW-0740">Sodium/potassium transport</keyword>
<keyword id="KW-1278">Translocase</keyword>
<keyword id="KW-0812">Transmembrane</keyword>
<keyword id="KW-1133">Transmembrane helix</keyword>
<keyword id="KW-0813">Transport</keyword>
<name>AT1A2_MOUSE</name>
<reference key="1">
    <citation type="journal article" date="2004" name="Genome Res.">
        <title>The status, quality, and expansion of the NIH full-length cDNA project: the Mammalian Gene Collection (MGC).</title>
        <authorList>
            <consortium name="The MGC Project Team"/>
        </authorList>
    </citation>
    <scope>NUCLEOTIDE SEQUENCE [LARGE SCALE MRNA]</scope>
    <source>
        <strain>Czech II</strain>
        <strain>FVB/N</strain>
        <tissue>Mammary tumor</tissue>
    </source>
</reference>
<reference key="2">
    <citation type="submission" date="2009-01" db="UniProtKB">
        <authorList>
            <person name="Lubec G."/>
            <person name="Kang S.U."/>
            <person name="Sunyer B."/>
            <person name="Chen W.-Q."/>
        </authorList>
    </citation>
    <scope>PROTEIN SEQUENCE OF 44-59; 73-89; 161-171; 176-192; 211-238; 254-262; 358-375; 413-428; 433-442; 444-456; 475-485; 494-505; 524-561; 565-602; 610-622; 627-655; 659-680; 696-771; 891-908; 938-947 AND 1008-1016</scope>
    <source>
        <strain>C57BL/6J</strain>
        <strain>OF1</strain>
        <tissue>Brain</tissue>
        <tissue>Hippocampus</tissue>
    </source>
</reference>
<reference key="3">
    <citation type="journal article" date="2010" name="Cell">
        <title>A tissue-specific atlas of mouse protein phosphorylation and expression.</title>
        <authorList>
            <person name="Huttlin E.L."/>
            <person name="Jedrychowski M.P."/>
            <person name="Elias J.E."/>
            <person name="Goswami T."/>
            <person name="Rad R."/>
            <person name="Beausoleil S.A."/>
            <person name="Villen J."/>
            <person name="Haas W."/>
            <person name="Sowa M.E."/>
            <person name="Gygi S.P."/>
        </authorList>
    </citation>
    <scope>PHOSPHORYLATION [LARGE SCALE ANALYSIS] AT SER-10; SER-450; SER-559 AND SER-672</scope>
    <scope>IDENTIFICATION BY MASS SPECTROMETRY [LARGE SCALE ANALYSIS]</scope>
    <source>
        <tissue>Brain</tissue>
        <tissue>Brown adipose tissue</tissue>
        <tissue>Heart</tissue>
        <tissue>Lung</tissue>
        <tissue>Testis</tissue>
    </source>
</reference>
<protein>
    <recommendedName>
        <fullName>Sodium/potassium-transporting ATPase subunit alpha-2</fullName>
        <shortName>Na(+)/K(+) ATPase alpha-2 subunit</shortName>
        <ecNumber>7.2.2.13</ecNumber>
    </recommendedName>
    <alternativeName>
        <fullName>Na(+)/K(+) ATPase alpha(+) subunit</fullName>
    </alternativeName>
    <alternativeName>
        <fullName>Sodium pump subunit alpha-2</fullName>
    </alternativeName>
</protein>
<feature type="propeptide" id="PRO_0000002505" evidence="1">
    <location>
        <begin position="1"/>
        <end position="5"/>
    </location>
</feature>
<feature type="chain" id="PRO_0000002506" description="Sodium/potassium-transporting ATPase subunit alpha-2">
    <location>
        <begin position="6"/>
        <end position="1020"/>
    </location>
</feature>
<feature type="topological domain" description="Cytoplasmic" evidence="6">
    <location>
        <begin position="6"/>
        <end position="85"/>
    </location>
</feature>
<feature type="transmembrane region" description="Helical" evidence="6">
    <location>
        <begin position="86"/>
        <end position="106"/>
    </location>
</feature>
<feature type="topological domain" description="Extracellular" evidence="6">
    <location>
        <begin position="107"/>
        <end position="129"/>
    </location>
</feature>
<feature type="transmembrane region" description="Helical" evidence="6">
    <location>
        <begin position="130"/>
        <end position="150"/>
    </location>
</feature>
<feature type="topological domain" description="Cytoplasmic" evidence="6">
    <location>
        <begin position="151"/>
        <end position="286"/>
    </location>
</feature>
<feature type="transmembrane region" description="Helical" evidence="6">
    <location>
        <begin position="287"/>
        <end position="306"/>
    </location>
</feature>
<feature type="topological domain" description="Extracellular" evidence="6">
    <location>
        <begin position="307"/>
        <end position="318"/>
    </location>
</feature>
<feature type="transmembrane region" description="Helical" evidence="6">
    <location>
        <begin position="319"/>
        <end position="336"/>
    </location>
</feature>
<feature type="topological domain" description="Cytoplasmic" evidence="6">
    <location>
        <begin position="337"/>
        <end position="769"/>
    </location>
</feature>
<feature type="transmembrane region" description="Helical" evidence="6">
    <location>
        <begin position="770"/>
        <end position="789"/>
    </location>
</feature>
<feature type="topological domain" description="Extracellular" evidence="6">
    <location>
        <begin position="790"/>
        <end position="799"/>
    </location>
</feature>
<feature type="transmembrane region" description="Helical" evidence="6">
    <location>
        <begin position="800"/>
        <end position="820"/>
    </location>
</feature>
<feature type="topological domain" description="Cytoplasmic" evidence="6">
    <location>
        <begin position="821"/>
        <end position="840"/>
    </location>
</feature>
<feature type="transmembrane region" description="Helical" evidence="6">
    <location>
        <begin position="841"/>
        <end position="863"/>
    </location>
</feature>
<feature type="topological domain" description="Extracellular" evidence="6">
    <location>
        <begin position="864"/>
        <end position="915"/>
    </location>
</feature>
<feature type="transmembrane region" description="Helical" evidence="6">
    <location>
        <begin position="916"/>
        <end position="935"/>
    </location>
</feature>
<feature type="topological domain" description="Cytoplasmic" evidence="6">
    <location>
        <begin position="936"/>
        <end position="948"/>
    </location>
</feature>
<feature type="transmembrane region" description="Helical" evidence="6">
    <location>
        <begin position="949"/>
        <end position="967"/>
    </location>
</feature>
<feature type="topological domain" description="Extracellular" evidence="6">
    <location>
        <begin position="968"/>
        <end position="982"/>
    </location>
</feature>
<feature type="transmembrane region" description="Helical" evidence="6">
    <location>
        <begin position="983"/>
        <end position="1003"/>
    </location>
</feature>
<feature type="topological domain" description="Cytoplasmic" evidence="6">
    <location>
        <begin position="1004"/>
        <end position="1020"/>
    </location>
</feature>
<feature type="region of interest" description="Disordered" evidence="7">
    <location>
        <begin position="1"/>
        <end position="31"/>
    </location>
</feature>
<feature type="region of interest" description="Interaction with phosphoinositide-3 kinase" evidence="1">
    <location>
        <begin position="80"/>
        <end position="82"/>
    </location>
</feature>
<feature type="region of interest" description="Disordered" evidence="7">
    <location>
        <begin position="212"/>
        <end position="231"/>
    </location>
</feature>
<feature type="compositionally biased region" description="Polar residues" evidence="7">
    <location>
        <begin position="212"/>
        <end position="227"/>
    </location>
</feature>
<feature type="active site" description="4-aspartylphosphate intermediate" evidence="1">
    <location>
        <position position="374"/>
    </location>
</feature>
<feature type="binding site" evidence="1">
    <location>
        <position position="714"/>
    </location>
    <ligand>
        <name>Mg(2+)</name>
        <dbReference type="ChEBI" id="CHEBI:18420"/>
    </ligand>
</feature>
<feature type="binding site" evidence="1">
    <location>
        <position position="718"/>
    </location>
    <ligand>
        <name>Mg(2+)</name>
        <dbReference type="ChEBI" id="CHEBI:18420"/>
    </ligand>
</feature>
<feature type="modified residue" description="Phosphoserine" evidence="9">
    <location>
        <position position="10"/>
    </location>
</feature>
<feature type="modified residue" description="Phosphoserine" evidence="3">
    <location>
        <position position="439"/>
    </location>
</feature>
<feature type="modified residue" description="Phosphoserine" evidence="9">
    <location>
        <position position="450"/>
    </location>
</feature>
<feature type="modified residue" description="Phosphoserine" evidence="3">
    <location>
        <position position="496"/>
    </location>
</feature>
<feature type="modified residue" description="Phosphoserine" evidence="9">
    <location>
        <position position="559"/>
    </location>
</feature>
<feature type="modified residue" description="Phosphothreonine" evidence="5">
    <location>
        <position position="570"/>
    </location>
</feature>
<feature type="modified residue" description="Phosphoserine" evidence="5">
    <location>
        <position position="587"/>
    </location>
</feature>
<feature type="modified residue" description="Phosphoserine" evidence="9">
    <location>
        <position position="672"/>
    </location>
</feature>
<feature type="modified residue" description="Phosphoserine" evidence="4">
    <location>
        <position position="826"/>
    </location>
</feature>
<feature type="modified residue" description="Phosphoserine; by PKA" evidence="1">
    <location>
        <position position="940"/>
    </location>
</feature>
<dbReference type="EC" id="7.2.2.13"/>
<dbReference type="EMBL" id="BC036127">
    <property type="protein sequence ID" value="AAH36127.1"/>
    <property type="molecule type" value="mRNA"/>
</dbReference>
<dbReference type="EMBL" id="BC041774">
    <property type="protein sequence ID" value="AAH41774.1"/>
    <property type="molecule type" value="mRNA"/>
</dbReference>
<dbReference type="CCDS" id="CCDS35782.1"/>
<dbReference type="RefSeq" id="NP_848492.1">
    <property type="nucleotide sequence ID" value="NM_178405.3"/>
</dbReference>
<dbReference type="SMR" id="Q6PIE5"/>
<dbReference type="BioGRID" id="221101">
    <property type="interactions" value="18"/>
</dbReference>
<dbReference type="DIP" id="DIP-48355N"/>
<dbReference type="FunCoup" id="Q6PIE5">
    <property type="interactions" value="651"/>
</dbReference>
<dbReference type="IntAct" id="Q6PIE5">
    <property type="interactions" value="8"/>
</dbReference>
<dbReference type="MINT" id="Q6PIE5"/>
<dbReference type="STRING" id="10090.ENSMUSP00000083077"/>
<dbReference type="GlyConnect" id="2726">
    <property type="glycosylation" value="1 N-Linked glycan (1 site)"/>
</dbReference>
<dbReference type="GlyCosmos" id="Q6PIE5">
    <property type="glycosylation" value="1 site, 1 glycan"/>
</dbReference>
<dbReference type="GlyGen" id="Q6PIE5">
    <property type="glycosylation" value="10 sites, 5 N-linked glycans (4 sites), 1 O-linked glycan (6 sites)"/>
</dbReference>
<dbReference type="iPTMnet" id="Q6PIE5"/>
<dbReference type="MetOSite" id="Q6PIE5"/>
<dbReference type="PhosphoSitePlus" id="Q6PIE5"/>
<dbReference type="SwissPalm" id="Q6PIE5"/>
<dbReference type="jPOST" id="Q6PIE5"/>
<dbReference type="PaxDb" id="10090-ENSMUSP00000083077"/>
<dbReference type="PeptideAtlas" id="Q6PIE5"/>
<dbReference type="ProteomicsDB" id="281816"/>
<dbReference type="Antibodypedia" id="34270">
    <property type="antibodies" value="165 antibodies from 27 providers"/>
</dbReference>
<dbReference type="DNASU" id="98660"/>
<dbReference type="Ensembl" id="ENSMUST00000085913.11">
    <property type="protein sequence ID" value="ENSMUSP00000083077.5"/>
    <property type="gene ID" value="ENSMUSG00000007097.15"/>
</dbReference>
<dbReference type="GeneID" id="98660"/>
<dbReference type="KEGG" id="mmu:98660"/>
<dbReference type="UCSC" id="uc007dqc.1">
    <property type="organism name" value="mouse"/>
</dbReference>
<dbReference type="AGR" id="MGI:88106"/>
<dbReference type="CTD" id="477"/>
<dbReference type="MGI" id="MGI:88106">
    <property type="gene designation" value="Atp1a2"/>
</dbReference>
<dbReference type="VEuPathDB" id="HostDB:ENSMUSG00000007097"/>
<dbReference type="eggNOG" id="KOG0203">
    <property type="taxonomic scope" value="Eukaryota"/>
</dbReference>
<dbReference type="GeneTree" id="ENSGT00940000159936"/>
<dbReference type="HOGENOM" id="CLU_002360_4_1_1"/>
<dbReference type="InParanoid" id="Q6PIE5"/>
<dbReference type="OMA" id="ISWEWAL"/>
<dbReference type="OrthoDB" id="3352408at2759"/>
<dbReference type="PhylomeDB" id="Q6PIE5"/>
<dbReference type="TreeFam" id="TF312838"/>
<dbReference type="Reactome" id="R-MMU-5578775">
    <property type="pathway name" value="Ion homeostasis"/>
</dbReference>
<dbReference type="Reactome" id="R-MMU-936837">
    <property type="pathway name" value="Ion transport by P-type ATPases"/>
</dbReference>
<dbReference type="BioGRID-ORCS" id="98660">
    <property type="hits" value="2 hits in 76 CRISPR screens"/>
</dbReference>
<dbReference type="CD-CODE" id="CE726F99">
    <property type="entry name" value="Postsynaptic density"/>
</dbReference>
<dbReference type="ChiTaRS" id="Atp1a2">
    <property type="organism name" value="mouse"/>
</dbReference>
<dbReference type="PRO" id="PR:Q6PIE5"/>
<dbReference type="Proteomes" id="UP000000589">
    <property type="component" value="Chromosome 1"/>
</dbReference>
<dbReference type="RNAct" id="Q6PIE5">
    <property type="molecule type" value="protein"/>
</dbReference>
<dbReference type="Bgee" id="ENSMUSG00000007097">
    <property type="expression patterns" value="Expressed in ciliary body and 249 other cell types or tissues"/>
</dbReference>
<dbReference type="ExpressionAtlas" id="Q6PIE5">
    <property type="expression patterns" value="baseline and differential"/>
</dbReference>
<dbReference type="GO" id="GO:0005901">
    <property type="term" value="C:caveola"/>
    <property type="evidence" value="ECO:0007669"/>
    <property type="project" value="Ensembl"/>
</dbReference>
<dbReference type="GO" id="GO:0042995">
    <property type="term" value="C:cell projection"/>
    <property type="evidence" value="ECO:0000314"/>
    <property type="project" value="ARUK-UCL"/>
</dbReference>
<dbReference type="GO" id="GO:0009986">
    <property type="term" value="C:cell surface"/>
    <property type="evidence" value="ECO:0000314"/>
    <property type="project" value="MGI"/>
</dbReference>
<dbReference type="GO" id="GO:0005737">
    <property type="term" value="C:cytoplasm"/>
    <property type="evidence" value="ECO:0000250"/>
    <property type="project" value="UniProtKB"/>
</dbReference>
<dbReference type="GO" id="GO:0043197">
    <property type="term" value="C:dendritic spine"/>
    <property type="evidence" value="ECO:0007669"/>
    <property type="project" value="Ensembl"/>
</dbReference>
<dbReference type="GO" id="GO:0005783">
    <property type="term" value="C:endoplasmic reticulum"/>
    <property type="evidence" value="ECO:0000314"/>
    <property type="project" value="MGI"/>
</dbReference>
<dbReference type="GO" id="GO:0005768">
    <property type="term" value="C:endosome"/>
    <property type="evidence" value="ECO:0007669"/>
    <property type="project" value="Ensembl"/>
</dbReference>
<dbReference type="GO" id="GO:0014704">
    <property type="term" value="C:intercalated disc"/>
    <property type="evidence" value="ECO:0007669"/>
    <property type="project" value="Ensembl"/>
</dbReference>
<dbReference type="GO" id="GO:0043209">
    <property type="term" value="C:myelin sheath"/>
    <property type="evidence" value="ECO:0007005"/>
    <property type="project" value="UniProtKB"/>
</dbReference>
<dbReference type="GO" id="GO:0043025">
    <property type="term" value="C:neuronal cell body"/>
    <property type="evidence" value="ECO:0000314"/>
    <property type="project" value="ARUK-UCL"/>
</dbReference>
<dbReference type="GO" id="GO:0031090">
    <property type="term" value="C:organelle membrane"/>
    <property type="evidence" value="ECO:0007669"/>
    <property type="project" value="Ensembl"/>
</dbReference>
<dbReference type="GO" id="GO:0005886">
    <property type="term" value="C:plasma membrane"/>
    <property type="evidence" value="ECO:0000314"/>
    <property type="project" value="MGI"/>
</dbReference>
<dbReference type="GO" id="GO:0032991">
    <property type="term" value="C:protein-containing complex"/>
    <property type="evidence" value="ECO:0000314"/>
    <property type="project" value="MGI"/>
</dbReference>
<dbReference type="GO" id="GO:0042383">
    <property type="term" value="C:sarcolemma"/>
    <property type="evidence" value="ECO:0000314"/>
    <property type="project" value="BHF-UCL"/>
</dbReference>
<dbReference type="GO" id="GO:0005890">
    <property type="term" value="C:sodium:potassium-exchanging ATPase complex"/>
    <property type="evidence" value="ECO:0007669"/>
    <property type="project" value="Ensembl"/>
</dbReference>
<dbReference type="GO" id="GO:0030315">
    <property type="term" value="C:T-tubule"/>
    <property type="evidence" value="ECO:0000314"/>
    <property type="project" value="BHF-UCL"/>
</dbReference>
<dbReference type="GO" id="GO:0005524">
    <property type="term" value="F:ATP binding"/>
    <property type="evidence" value="ECO:0007669"/>
    <property type="project" value="UniProtKB-KW"/>
</dbReference>
<dbReference type="GO" id="GO:0016887">
    <property type="term" value="F:ATP hydrolysis activity"/>
    <property type="evidence" value="ECO:0007669"/>
    <property type="project" value="Ensembl"/>
</dbReference>
<dbReference type="GO" id="GO:0005391">
    <property type="term" value="F:P-type sodium:potassium-exchanging transporter activity"/>
    <property type="evidence" value="ECO:0000250"/>
    <property type="project" value="UniProtKB"/>
</dbReference>
<dbReference type="GO" id="GO:0030955">
    <property type="term" value="F:potassium ion binding"/>
    <property type="evidence" value="ECO:0007669"/>
    <property type="project" value="Ensembl"/>
</dbReference>
<dbReference type="GO" id="GO:0046982">
    <property type="term" value="F:protein heterodimerization activity"/>
    <property type="evidence" value="ECO:0007669"/>
    <property type="project" value="Ensembl"/>
</dbReference>
<dbReference type="GO" id="GO:0051087">
    <property type="term" value="F:protein-folding chaperone binding"/>
    <property type="evidence" value="ECO:0007669"/>
    <property type="project" value="Ensembl"/>
</dbReference>
<dbReference type="GO" id="GO:0031402">
    <property type="term" value="F:sodium ion binding"/>
    <property type="evidence" value="ECO:0007669"/>
    <property type="project" value="Ensembl"/>
</dbReference>
<dbReference type="GO" id="GO:1990239">
    <property type="term" value="F:steroid hormone binding"/>
    <property type="evidence" value="ECO:0007669"/>
    <property type="project" value="Ensembl"/>
</dbReference>
<dbReference type="GO" id="GO:0008344">
    <property type="term" value="P:adult locomotory behavior"/>
    <property type="evidence" value="ECO:0000315"/>
    <property type="project" value="MGI"/>
</dbReference>
<dbReference type="GO" id="GO:0021764">
    <property type="term" value="P:amygdala development"/>
    <property type="evidence" value="ECO:0000315"/>
    <property type="project" value="ARUK-UCL"/>
</dbReference>
<dbReference type="GO" id="GO:0046034">
    <property type="term" value="P:ATP metabolic process"/>
    <property type="evidence" value="ECO:0007669"/>
    <property type="project" value="Ensembl"/>
</dbReference>
<dbReference type="GO" id="GO:0001662">
    <property type="term" value="P:behavioral fear response"/>
    <property type="evidence" value="ECO:0000315"/>
    <property type="project" value="ARUK-UCL"/>
</dbReference>
<dbReference type="GO" id="GO:0008015">
    <property type="term" value="P:blood circulation"/>
    <property type="evidence" value="ECO:0000316"/>
    <property type="project" value="MGI"/>
</dbReference>
<dbReference type="GO" id="GO:0071260">
    <property type="term" value="P:cellular response to mechanical stimulus"/>
    <property type="evidence" value="ECO:0007669"/>
    <property type="project" value="Ensembl"/>
</dbReference>
<dbReference type="GO" id="GO:0071383">
    <property type="term" value="P:cellular response to steroid hormone stimulus"/>
    <property type="evidence" value="ECO:0000314"/>
    <property type="project" value="BHF-UCL"/>
</dbReference>
<dbReference type="GO" id="GO:0042596">
    <property type="term" value="P:fear response"/>
    <property type="evidence" value="ECO:0000315"/>
    <property type="project" value="MGI"/>
</dbReference>
<dbReference type="GO" id="GO:0030007">
    <property type="term" value="P:intracellular potassium ion homeostasis"/>
    <property type="evidence" value="ECO:0007669"/>
    <property type="project" value="Ensembl"/>
</dbReference>
<dbReference type="GO" id="GO:0006883">
    <property type="term" value="P:intracellular sodium ion homeostasis"/>
    <property type="evidence" value="ECO:0007669"/>
    <property type="project" value="Ensembl"/>
</dbReference>
<dbReference type="GO" id="GO:0019852">
    <property type="term" value="P:L-ascorbic acid metabolic process"/>
    <property type="evidence" value="ECO:0000316"/>
    <property type="project" value="MGI"/>
</dbReference>
<dbReference type="GO" id="GO:0040011">
    <property type="term" value="P:locomotion"/>
    <property type="evidence" value="ECO:0000315"/>
    <property type="project" value="MGI"/>
</dbReference>
<dbReference type="GO" id="GO:0035641">
    <property type="term" value="P:locomotory exploration behavior"/>
    <property type="evidence" value="ECO:0000315"/>
    <property type="project" value="ARUK-UCL"/>
</dbReference>
<dbReference type="GO" id="GO:0051899">
    <property type="term" value="P:membrane depolarization"/>
    <property type="evidence" value="ECO:0000315"/>
    <property type="project" value="MGI"/>
</dbReference>
<dbReference type="GO" id="GO:1903170">
    <property type="term" value="P:negative regulation of calcium ion transmembrane transport"/>
    <property type="evidence" value="ECO:0007669"/>
    <property type="project" value="Ensembl"/>
</dbReference>
<dbReference type="GO" id="GO:0051481">
    <property type="term" value="P:negative regulation of cytosolic calcium ion concentration"/>
    <property type="evidence" value="ECO:0000315"/>
    <property type="project" value="MGI"/>
</dbReference>
<dbReference type="GO" id="GO:0045822">
    <property type="term" value="P:negative regulation of heart contraction"/>
    <property type="evidence" value="ECO:0000315"/>
    <property type="project" value="MGI"/>
</dbReference>
<dbReference type="GO" id="GO:0045988">
    <property type="term" value="P:negative regulation of striated muscle contraction"/>
    <property type="evidence" value="ECO:0000315"/>
    <property type="project" value="MGI"/>
</dbReference>
<dbReference type="GO" id="GO:0019227">
    <property type="term" value="P:neuronal action potential propagation"/>
    <property type="evidence" value="ECO:0000315"/>
    <property type="project" value="MGI"/>
</dbReference>
<dbReference type="GO" id="GO:0001504">
    <property type="term" value="P:neurotransmitter uptake"/>
    <property type="evidence" value="ECO:0000315"/>
    <property type="project" value="ARUK-UCL"/>
</dbReference>
<dbReference type="GO" id="GO:0021989">
    <property type="term" value="P:olfactory cortex development"/>
    <property type="evidence" value="ECO:0000315"/>
    <property type="project" value="ARUK-UCL"/>
</dbReference>
<dbReference type="GO" id="GO:1990573">
    <property type="term" value="P:potassium ion import across plasma membrane"/>
    <property type="evidence" value="ECO:0007669"/>
    <property type="project" value="Ensembl"/>
</dbReference>
<dbReference type="GO" id="GO:1902600">
    <property type="term" value="P:proton transmembrane transport"/>
    <property type="evidence" value="ECO:0007669"/>
    <property type="project" value="Ensembl"/>
</dbReference>
<dbReference type="GO" id="GO:0008217">
    <property type="term" value="P:regulation of blood pressure"/>
    <property type="evidence" value="ECO:0000316"/>
    <property type="project" value="MGI"/>
</dbReference>
<dbReference type="GO" id="GO:0086004">
    <property type="term" value="P:regulation of cardiac muscle cell contraction"/>
    <property type="evidence" value="ECO:0007669"/>
    <property type="project" value="Ensembl"/>
</dbReference>
<dbReference type="GO" id="GO:0006937">
    <property type="term" value="P:regulation of muscle contraction"/>
    <property type="evidence" value="ECO:0000315"/>
    <property type="project" value="MGI"/>
</dbReference>
<dbReference type="GO" id="GO:0002087">
    <property type="term" value="P:regulation of respiratory gaseous exchange by nervous system process"/>
    <property type="evidence" value="ECO:0000315"/>
    <property type="project" value="MGI"/>
</dbReference>
<dbReference type="GO" id="GO:0006940">
    <property type="term" value="P:regulation of smooth muscle contraction"/>
    <property type="evidence" value="ECO:0000315"/>
    <property type="project" value="MGI"/>
</dbReference>
<dbReference type="GO" id="GO:0006942">
    <property type="term" value="P:regulation of striated muscle contraction"/>
    <property type="evidence" value="ECO:0000315"/>
    <property type="project" value="MGI"/>
</dbReference>
<dbReference type="GO" id="GO:0002026">
    <property type="term" value="P:regulation of the force of heart contraction"/>
    <property type="evidence" value="ECO:0000315"/>
    <property type="project" value="MGI"/>
</dbReference>
<dbReference type="GO" id="GO:0019229">
    <property type="term" value="P:regulation of vasoconstriction"/>
    <property type="evidence" value="ECO:0000315"/>
    <property type="project" value="MGI"/>
</dbReference>
<dbReference type="GO" id="GO:0010996">
    <property type="term" value="P:response to auditory stimulus"/>
    <property type="evidence" value="ECO:0000315"/>
    <property type="project" value="ARUK-UCL"/>
</dbReference>
<dbReference type="GO" id="GO:1903416">
    <property type="term" value="P:response to glycoside"/>
    <property type="evidence" value="ECO:0000315"/>
    <property type="project" value="BHF-UCL"/>
</dbReference>
<dbReference type="GO" id="GO:0035094">
    <property type="term" value="P:response to nicotine"/>
    <property type="evidence" value="ECO:0007669"/>
    <property type="project" value="Ensembl"/>
</dbReference>
<dbReference type="GO" id="GO:0035864">
    <property type="term" value="P:response to potassium ion"/>
    <property type="evidence" value="ECO:0000315"/>
    <property type="project" value="MGI"/>
</dbReference>
<dbReference type="GO" id="GO:0036376">
    <property type="term" value="P:sodium ion export across plasma membrane"/>
    <property type="evidence" value="ECO:0007669"/>
    <property type="project" value="Ensembl"/>
</dbReference>
<dbReference type="GO" id="GO:0008542">
    <property type="term" value="P:visual learning"/>
    <property type="evidence" value="ECO:0000315"/>
    <property type="project" value="MGI"/>
</dbReference>
<dbReference type="CDD" id="cd02608">
    <property type="entry name" value="P-type_ATPase_Na-K_like"/>
    <property type="match status" value="1"/>
</dbReference>
<dbReference type="FunFam" id="2.70.150.10:FF:000142">
    <property type="entry name" value="Na/K ATPase alpha 2 subunit"/>
    <property type="match status" value="1"/>
</dbReference>
<dbReference type="FunFam" id="2.70.150.10:FF:000106">
    <property type="entry name" value="Sodium/potassium-transporting ATPase subunit alpha"/>
    <property type="match status" value="1"/>
</dbReference>
<dbReference type="FunFam" id="3.40.1110.10:FF:000001">
    <property type="entry name" value="Sodium/potassium-transporting ATPase subunit alpha"/>
    <property type="match status" value="1"/>
</dbReference>
<dbReference type="FunFam" id="3.40.50.1000:FF:000004">
    <property type="entry name" value="Sodium/potassium-transporting ATPase subunit alpha"/>
    <property type="match status" value="1"/>
</dbReference>
<dbReference type="FunFam" id="1.20.1110.10:FF:000095">
    <property type="entry name" value="Sodium/potassium-transporting ATPase subunit alpha-1"/>
    <property type="match status" value="2"/>
</dbReference>
<dbReference type="Gene3D" id="3.40.1110.10">
    <property type="entry name" value="Calcium-transporting ATPase, cytoplasmic domain N"/>
    <property type="match status" value="1"/>
</dbReference>
<dbReference type="Gene3D" id="2.70.150.10">
    <property type="entry name" value="Calcium-transporting ATPase, cytoplasmic transduction domain A"/>
    <property type="match status" value="1"/>
</dbReference>
<dbReference type="Gene3D" id="1.20.1110.10">
    <property type="entry name" value="Calcium-transporting ATPase, transmembrane domain"/>
    <property type="match status" value="1"/>
</dbReference>
<dbReference type="Gene3D" id="3.40.50.1000">
    <property type="entry name" value="HAD superfamily/HAD-like"/>
    <property type="match status" value="1"/>
</dbReference>
<dbReference type="InterPro" id="IPR006068">
    <property type="entry name" value="ATPase_P-typ_cation-transptr_C"/>
</dbReference>
<dbReference type="InterPro" id="IPR004014">
    <property type="entry name" value="ATPase_P-typ_cation-transptr_N"/>
</dbReference>
<dbReference type="InterPro" id="IPR023299">
    <property type="entry name" value="ATPase_P-typ_cyto_dom_N"/>
</dbReference>
<dbReference type="InterPro" id="IPR018303">
    <property type="entry name" value="ATPase_P-typ_P_site"/>
</dbReference>
<dbReference type="InterPro" id="IPR023298">
    <property type="entry name" value="ATPase_P-typ_TM_dom_sf"/>
</dbReference>
<dbReference type="InterPro" id="IPR008250">
    <property type="entry name" value="ATPase_P-typ_transduc_dom_A_sf"/>
</dbReference>
<dbReference type="InterPro" id="IPR050510">
    <property type="entry name" value="Cation_transp_ATPase_P-type"/>
</dbReference>
<dbReference type="InterPro" id="IPR036412">
    <property type="entry name" value="HAD-like_sf"/>
</dbReference>
<dbReference type="InterPro" id="IPR023214">
    <property type="entry name" value="HAD_sf"/>
</dbReference>
<dbReference type="InterPro" id="IPR005775">
    <property type="entry name" value="P-type_ATPase_IIC"/>
</dbReference>
<dbReference type="InterPro" id="IPR001757">
    <property type="entry name" value="P_typ_ATPase"/>
</dbReference>
<dbReference type="InterPro" id="IPR044492">
    <property type="entry name" value="P_typ_ATPase_HD_dom"/>
</dbReference>
<dbReference type="NCBIfam" id="TIGR01106">
    <property type="entry name" value="ATPase-IIC_X-K"/>
    <property type="match status" value="1"/>
</dbReference>
<dbReference type="NCBIfam" id="TIGR01494">
    <property type="entry name" value="ATPase_P-type"/>
    <property type="match status" value="2"/>
</dbReference>
<dbReference type="PANTHER" id="PTHR43294">
    <property type="entry name" value="SODIUM/POTASSIUM-TRANSPORTING ATPASE SUBUNIT ALPHA"/>
    <property type="match status" value="1"/>
</dbReference>
<dbReference type="PANTHER" id="PTHR43294:SF6">
    <property type="entry name" value="SODIUM_POTASSIUM-TRANSPORTING ATPASE SUBUNIT ALPHA-2"/>
    <property type="match status" value="1"/>
</dbReference>
<dbReference type="Pfam" id="PF13246">
    <property type="entry name" value="Cation_ATPase"/>
    <property type="match status" value="1"/>
</dbReference>
<dbReference type="Pfam" id="PF00689">
    <property type="entry name" value="Cation_ATPase_C"/>
    <property type="match status" value="1"/>
</dbReference>
<dbReference type="Pfam" id="PF00690">
    <property type="entry name" value="Cation_ATPase_N"/>
    <property type="match status" value="1"/>
</dbReference>
<dbReference type="Pfam" id="PF00122">
    <property type="entry name" value="E1-E2_ATPase"/>
    <property type="match status" value="1"/>
</dbReference>
<dbReference type="Pfam" id="PF00702">
    <property type="entry name" value="Hydrolase"/>
    <property type="match status" value="1"/>
</dbReference>
<dbReference type="PRINTS" id="PR00119">
    <property type="entry name" value="CATATPASE"/>
</dbReference>
<dbReference type="PRINTS" id="PR00121">
    <property type="entry name" value="NAKATPASE"/>
</dbReference>
<dbReference type="SFLD" id="SFLDG00002">
    <property type="entry name" value="C1.7:_P-type_atpase_like"/>
    <property type="match status" value="1"/>
</dbReference>
<dbReference type="SFLD" id="SFLDF00027">
    <property type="entry name" value="p-type_atpase"/>
    <property type="match status" value="1"/>
</dbReference>
<dbReference type="SMART" id="SM00831">
    <property type="entry name" value="Cation_ATPase_N"/>
    <property type="match status" value="1"/>
</dbReference>
<dbReference type="SUPFAM" id="SSF81653">
    <property type="entry name" value="Calcium ATPase, transduction domain A"/>
    <property type="match status" value="1"/>
</dbReference>
<dbReference type="SUPFAM" id="SSF81665">
    <property type="entry name" value="Calcium ATPase, transmembrane domain M"/>
    <property type="match status" value="1"/>
</dbReference>
<dbReference type="SUPFAM" id="SSF56784">
    <property type="entry name" value="HAD-like"/>
    <property type="match status" value="1"/>
</dbReference>
<dbReference type="SUPFAM" id="SSF81660">
    <property type="entry name" value="Metal cation-transporting ATPase, ATP-binding domain N"/>
    <property type="match status" value="1"/>
</dbReference>
<dbReference type="PROSITE" id="PS00154">
    <property type="entry name" value="ATPASE_E1_E2"/>
    <property type="match status" value="1"/>
</dbReference>
<accession>Q6PIE5</accession>
<accession>Q80UZ8</accession>
<organism>
    <name type="scientific">Mus musculus</name>
    <name type="common">Mouse</name>
    <dbReference type="NCBI Taxonomy" id="10090"/>
    <lineage>
        <taxon>Eukaryota</taxon>
        <taxon>Metazoa</taxon>
        <taxon>Chordata</taxon>
        <taxon>Craniata</taxon>
        <taxon>Vertebrata</taxon>
        <taxon>Euteleostomi</taxon>
        <taxon>Mammalia</taxon>
        <taxon>Eutheria</taxon>
        <taxon>Euarchontoglires</taxon>
        <taxon>Glires</taxon>
        <taxon>Rodentia</taxon>
        <taxon>Myomorpha</taxon>
        <taxon>Muroidea</taxon>
        <taxon>Muridae</taxon>
        <taxon>Murinae</taxon>
        <taxon>Mus</taxon>
        <taxon>Mus</taxon>
    </lineage>
</organism>